<reference key="1">
    <citation type="submission" date="2009-01" db="EMBL/GenBank/DDBJ databases">
        <title>Complete sequence of chromosome of Methylobacterium nodulans ORS 2060.</title>
        <authorList>
            <consortium name="US DOE Joint Genome Institute"/>
            <person name="Lucas S."/>
            <person name="Copeland A."/>
            <person name="Lapidus A."/>
            <person name="Glavina del Rio T."/>
            <person name="Dalin E."/>
            <person name="Tice H."/>
            <person name="Bruce D."/>
            <person name="Goodwin L."/>
            <person name="Pitluck S."/>
            <person name="Sims D."/>
            <person name="Brettin T."/>
            <person name="Detter J.C."/>
            <person name="Han C."/>
            <person name="Larimer F."/>
            <person name="Land M."/>
            <person name="Hauser L."/>
            <person name="Kyrpides N."/>
            <person name="Ivanova N."/>
            <person name="Marx C.J."/>
            <person name="Richardson P."/>
        </authorList>
    </citation>
    <scope>NUCLEOTIDE SEQUENCE [LARGE SCALE GENOMIC DNA]</scope>
    <source>
        <strain>LMG 21967 / CNCM I-2342 / ORS 2060</strain>
    </source>
</reference>
<accession>B8IN02</accession>
<comment type="function">
    <text evidence="1">Produces ATP from ADP in the presence of a proton gradient across the membrane. The gamma chain is believed to be important in regulating ATPase activity and the flow of protons through the CF(0) complex.</text>
</comment>
<comment type="subunit">
    <text evidence="1">F-type ATPases have 2 components, CF(1) - the catalytic core - and CF(0) - the membrane proton channel. CF(1) has five subunits: alpha(3), beta(3), gamma(1), delta(1), epsilon(1). CF(0) has three main subunits: a, b and c.</text>
</comment>
<comment type="subcellular location">
    <subcellularLocation>
        <location evidence="1">Cell inner membrane</location>
        <topology evidence="1">Peripheral membrane protein</topology>
    </subcellularLocation>
</comment>
<comment type="similarity">
    <text evidence="1">Belongs to the ATPase gamma chain family.</text>
</comment>
<name>ATPG_METNO</name>
<gene>
    <name evidence="1" type="primary">atpG</name>
    <name type="ordered locus">Mnod_7381</name>
</gene>
<organism>
    <name type="scientific">Methylobacterium nodulans (strain LMG 21967 / CNCM I-2342 / ORS 2060)</name>
    <dbReference type="NCBI Taxonomy" id="460265"/>
    <lineage>
        <taxon>Bacteria</taxon>
        <taxon>Pseudomonadati</taxon>
        <taxon>Pseudomonadota</taxon>
        <taxon>Alphaproteobacteria</taxon>
        <taxon>Hyphomicrobiales</taxon>
        <taxon>Methylobacteriaceae</taxon>
        <taxon>Methylobacterium</taxon>
    </lineage>
</organism>
<dbReference type="EMBL" id="CP001349">
    <property type="protein sequence ID" value="ACL62118.1"/>
    <property type="molecule type" value="Genomic_DNA"/>
</dbReference>
<dbReference type="RefSeq" id="WP_015933676.1">
    <property type="nucleotide sequence ID" value="NC_011894.1"/>
</dbReference>
<dbReference type="SMR" id="B8IN02"/>
<dbReference type="STRING" id="460265.Mnod_7381"/>
<dbReference type="KEGG" id="mno:Mnod_7381"/>
<dbReference type="eggNOG" id="COG0224">
    <property type="taxonomic scope" value="Bacteria"/>
</dbReference>
<dbReference type="HOGENOM" id="CLU_050669_0_1_5"/>
<dbReference type="OrthoDB" id="9812769at2"/>
<dbReference type="Proteomes" id="UP000008207">
    <property type="component" value="Chromosome"/>
</dbReference>
<dbReference type="GO" id="GO:0005886">
    <property type="term" value="C:plasma membrane"/>
    <property type="evidence" value="ECO:0007669"/>
    <property type="project" value="UniProtKB-SubCell"/>
</dbReference>
<dbReference type="GO" id="GO:0045259">
    <property type="term" value="C:proton-transporting ATP synthase complex"/>
    <property type="evidence" value="ECO:0007669"/>
    <property type="project" value="UniProtKB-KW"/>
</dbReference>
<dbReference type="GO" id="GO:0005524">
    <property type="term" value="F:ATP binding"/>
    <property type="evidence" value="ECO:0007669"/>
    <property type="project" value="UniProtKB-UniRule"/>
</dbReference>
<dbReference type="GO" id="GO:0046933">
    <property type="term" value="F:proton-transporting ATP synthase activity, rotational mechanism"/>
    <property type="evidence" value="ECO:0007669"/>
    <property type="project" value="UniProtKB-UniRule"/>
</dbReference>
<dbReference type="GO" id="GO:0042777">
    <property type="term" value="P:proton motive force-driven plasma membrane ATP synthesis"/>
    <property type="evidence" value="ECO:0007669"/>
    <property type="project" value="UniProtKB-UniRule"/>
</dbReference>
<dbReference type="CDD" id="cd12151">
    <property type="entry name" value="F1-ATPase_gamma"/>
    <property type="match status" value="1"/>
</dbReference>
<dbReference type="FunFam" id="1.10.287.80:FF:000001">
    <property type="entry name" value="ATP synthase gamma chain"/>
    <property type="match status" value="1"/>
</dbReference>
<dbReference type="FunFam" id="1.10.287.80:FF:000003">
    <property type="entry name" value="ATP synthase gamma chain, chloroplastic"/>
    <property type="match status" value="1"/>
</dbReference>
<dbReference type="Gene3D" id="3.40.1380.10">
    <property type="match status" value="1"/>
</dbReference>
<dbReference type="Gene3D" id="1.10.287.80">
    <property type="entry name" value="ATP synthase, gamma subunit, helix hairpin domain"/>
    <property type="match status" value="1"/>
</dbReference>
<dbReference type="HAMAP" id="MF_00815">
    <property type="entry name" value="ATP_synth_gamma_bact"/>
    <property type="match status" value="1"/>
</dbReference>
<dbReference type="InterPro" id="IPR035968">
    <property type="entry name" value="ATP_synth_F1_ATPase_gsu"/>
</dbReference>
<dbReference type="InterPro" id="IPR000131">
    <property type="entry name" value="ATP_synth_F1_gsu"/>
</dbReference>
<dbReference type="InterPro" id="IPR023632">
    <property type="entry name" value="ATP_synth_F1_gsu_CS"/>
</dbReference>
<dbReference type="NCBIfam" id="TIGR01146">
    <property type="entry name" value="ATPsyn_F1gamma"/>
    <property type="match status" value="1"/>
</dbReference>
<dbReference type="NCBIfam" id="NF004146">
    <property type="entry name" value="PRK05621.1-4"/>
    <property type="match status" value="1"/>
</dbReference>
<dbReference type="PANTHER" id="PTHR11693">
    <property type="entry name" value="ATP SYNTHASE GAMMA CHAIN"/>
    <property type="match status" value="1"/>
</dbReference>
<dbReference type="PANTHER" id="PTHR11693:SF22">
    <property type="entry name" value="ATP SYNTHASE SUBUNIT GAMMA, MITOCHONDRIAL"/>
    <property type="match status" value="1"/>
</dbReference>
<dbReference type="Pfam" id="PF00231">
    <property type="entry name" value="ATP-synt"/>
    <property type="match status" value="1"/>
</dbReference>
<dbReference type="PIRSF" id="PIRSF039089">
    <property type="entry name" value="ATP_synthase_gamma"/>
    <property type="match status" value="1"/>
</dbReference>
<dbReference type="PRINTS" id="PR00126">
    <property type="entry name" value="ATPASEGAMMA"/>
</dbReference>
<dbReference type="SUPFAM" id="SSF52943">
    <property type="entry name" value="ATP synthase (F1-ATPase), gamma subunit"/>
    <property type="match status" value="1"/>
</dbReference>
<dbReference type="PROSITE" id="PS00153">
    <property type="entry name" value="ATPASE_GAMMA"/>
    <property type="match status" value="1"/>
</dbReference>
<sequence>MASLKDLRNRIASVKATQKITKAMQMVAAAKLRRAQNAAENARPYAERMAAVLGNLATNLTPGAETPRLLAGTGADRVHLLVVCTAERGLCGAFNSSIARLARDHARRLVAEGKTVKIICVGKKGYDILRREFRDQIVELIELRGVRQLGFENAEAVTENLLNRFEAGEFDIATLFYSRFRSVIAQVPTAQQIIPAEISPASESAQTDAAYEYEPEEGEILAALLPKNLTVQILRALLENAASEQGARMSAMDSATRNAGEMIKKQTLVYNRTRQAMITKELIEIISGAEAL</sequence>
<feature type="chain" id="PRO_1000148627" description="ATP synthase gamma chain">
    <location>
        <begin position="1"/>
        <end position="292"/>
    </location>
</feature>
<proteinExistence type="inferred from homology"/>
<evidence type="ECO:0000255" key="1">
    <source>
        <dbReference type="HAMAP-Rule" id="MF_00815"/>
    </source>
</evidence>
<protein>
    <recommendedName>
        <fullName evidence="1">ATP synthase gamma chain</fullName>
    </recommendedName>
    <alternativeName>
        <fullName evidence="1">ATP synthase F1 sector gamma subunit</fullName>
    </alternativeName>
    <alternativeName>
        <fullName evidence="1">F-ATPase gamma subunit</fullName>
    </alternativeName>
</protein>
<keyword id="KW-0066">ATP synthesis</keyword>
<keyword id="KW-0997">Cell inner membrane</keyword>
<keyword id="KW-1003">Cell membrane</keyword>
<keyword id="KW-0139">CF(1)</keyword>
<keyword id="KW-0375">Hydrogen ion transport</keyword>
<keyword id="KW-0406">Ion transport</keyword>
<keyword id="KW-0472">Membrane</keyword>
<keyword id="KW-1185">Reference proteome</keyword>
<keyword id="KW-0813">Transport</keyword>